<proteinExistence type="inferred from homology"/>
<feature type="chain" id="PRO_0000318734" description="Cysteine/O-acetylserine efflux protein">
    <location>
        <begin position="1"/>
        <end position="195"/>
    </location>
</feature>
<feature type="topological domain" description="Periplasmic" evidence="2">
    <location>
        <begin position="1"/>
        <end position="9"/>
    </location>
</feature>
<feature type="transmembrane region" description="Helical" evidence="2">
    <location>
        <begin position="10"/>
        <end position="32"/>
    </location>
</feature>
<feature type="topological domain" description="Cytoplasmic" evidence="2">
    <location>
        <begin position="33"/>
        <end position="46"/>
    </location>
</feature>
<feature type="transmembrane region" description="Helical" evidence="2">
    <location>
        <begin position="47"/>
        <end position="67"/>
    </location>
</feature>
<feature type="topological domain" description="Periplasmic" evidence="2">
    <location>
        <begin position="68"/>
        <end position="69"/>
    </location>
</feature>
<feature type="transmembrane region" description="Helical" evidence="2">
    <location>
        <begin position="70"/>
        <end position="90"/>
    </location>
</feature>
<feature type="topological domain" description="Cytoplasmic" evidence="2">
    <location>
        <begin position="91"/>
        <end position="104"/>
    </location>
</feature>
<feature type="transmembrane region" description="Helical" evidence="2">
    <location>
        <begin position="105"/>
        <end position="125"/>
    </location>
</feature>
<feature type="topological domain" description="Periplasmic" evidence="2">
    <location>
        <begin position="126"/>
        <end position="141"/>
    </location>
</feature>
<feature type="transmembrane region" description="Helical" evidence="2">
    <location>
        <begin position="142"/>
        <end position="162"/>
    </location>
</feature>
<feature type="topological domain" description="Cytoplasmic" evidence="2">
    <location>
        <begin position="163"/>
        <end position="176"/>
    </location>
</feature>
<feature type="transmembrane region" description="Helical" evidence="2">
    <location>
        <begin position="177"/>
        <end position="194"/>
    </location>
</feature>
<feature type="topological domain" description="Periplasmic" evidence="1">
    <location>
        <position position="195"/>
    </location>
</feature>
<comment type="function">
    <text evidence="1">Exporter of O-acetylserine (OAS) and cysteine.</text>
</comment>
<comment type="catalytic activity">
    <reaction evidence="1">
        <text>O-acetyl-L-serine(in) = O-acetyl-L-serine(out)</text>
        <dbReference type="Rhea" id="RHEA:29659"/>
        <dbReference type="ChEBI" id="CHEBI:58340"/>
    </reaction>
    <physiologicalReaction direction="left-to-right" evidence="1">
        <dbReference type="Rhea" id="RHEA:29660"/>
    </physiologicalReaction>
</comment>
<comment type="catalytic activity">
    <reaction evidence="1">
        <text>L-cysteine(in) = L-cysteine(out)</text>
        <dbReference type="Rhea" id="RHEA:29655"/>
        <dbReference type="ChEBI" id="CHEBI:35235"/>
    </reaction>
    <physiologicalReaction direction="left-to-right" evidence="1">
        <dbReference type="Rhea" id="RHEA:29656"/>
    </physiologicalReaction>
</comment>
<comment type="subcellular location">
    <subcellularLocation>
        <location evidence="1">Cell inner membrane</location>
        <topology evidence="2">Multi-pass membrane protein</topology>
    </subcellularLocation>
</comment>
<comment type="similarity">
    <text evidence="3">Belongs to the Rht family.</text>
</comment>
<evidence type="ECO:0000250" key="1">
    <source>
        <dbReference type="UniProtKB" id="P38101"/>
    </source>
</evidence>
<evidence type="ECO:0000255" key="2"/>
<evidence type="ECO:0000305" key="3"/>
<sequence length="195" mass="21260">MTPILLSAFWTYTLITAMTPGPNNILALSSATSHGFRQSTRVLAGMSLGFLIVMLLCAGISFSLAVIDPAAVHLLSWAGAAYIVWLAWKIATSPTKEDGLQAKPISFWASFALQFVNVKIILYGVTALSTFVLPQTQALSWVVGVSVLLAMIGTFGNVCWALAGHLFQRLFRQYGRQLNIVLALLLVYCAVRIFY</sequence>
<organism>
    <name type="scientific">Shigella flexneri serotype 5b (strain 8401)</name>
    <dbReference type="NCBI Taxonomy" id="373384"/>
    <lineage>
        <taxon>Bacteria</taxon>
        <taxon>Pseudomonadati</taxon>
        <taxon>Pseudomonadota</taxon>
        <taxon>Gammaproteobacteria</taxon>
        <taxon>Enterobacterales</taxon>
        <taxon>Enterobacteriaceae</taxon>
        <taxon>Shigella</taxon>
    </lineage>
</organism>
<keyword id="KW-0029">Amino-acid transport</keyword>
<keyword id="KW-0997">Cell inner membrane</keyword>
<keyword id="KW-1003">Cell membrane</keyword>
<keyword id="KW-0472">Membrane</keyword>
<keyword id="KW-0812">Transmembrane</keyword>
<keyword id="KW-1133">Transmembrane helix</keyword>
<keyword id="KW-0813">Transport</keyword>
<reference key="1">
    <citation type="journal article" date="2006" name="BMC Genomics">
        <title>Complete genome sequence of Shigella flexneri 5b and comparison with Shigella flexneri 2a.</title>
        <authorList>
            <person name="Nie H."/>
            <person name="Yang F."/>
            <person name="Zhang X."/>
            <person name="Yang J."/>
            <person name="Chen L."/>
            <person name="Wang J."/>
            <person name="Xiong Z."/>
            <person name="Peng J."/>
            <person name="Sun L."/>
            <person name="Dong J."/>
            <person name="Xue Y."/>
            <person name="Xu X."/>
            <person name="Chen S."/>
            <person name="Yao Z."/>
            <person name="Shen Y."/>
            <person name="Jin Q."/>
        </authorList>
    </citation>
    <scope>NUCLEOTIDE SEQUENCE [LARGE SCALE GENOMIC DNA]</scope>
    <source>
        <strain>8401</strain>
    </source>
</reference>
<protein>
    <recommendedName>
        <fullName evidence="1">Cysteine/O-acetylserine efflux protein</fullName>
    </recommendedName>
</protein>
<gene>
    <name type="primary">eamB</name>
    <name type="ordered locus">SFV_2641</name>
</gene>
<name>EAMB_SHIF8</name>
<dbReference type="EMBL" id="CP000266">
    <property type="protein sequence ID" value="ABF04737.1"/>
    <property type="molecule type" value="Genomic_DNA"/>
</dbReference>
<dbReference type="RefSeq" id="WP_000187873.1">
    <property type="nucleotide sequence ID" value="NC_008258.1"/>
</dbReference>
<dbReference type="KEGG" id="sfv:SFV_2641"/>
<dbReference type="HOGENOM" id="CLU_079569_1_2_6"/>
<dbReference type="Proteomes" id="UP000000659">
    <property type="component" value="Chromosome"/>
</dbReference>
<dbReference type="GO" id="GO:0005886">
    <property type="term" value="C:plasma membrane"/>
    <property type="evidence" value="ECO:0007669"/>
    <property type="project" value="UniProtKB-SubCell"/>
</dbReference>
<dbReference type="GO" id="GO:0015171">
    <property type="term" value="F:amino acid transmembrane transporter activity"/>
    <property type="evidence" value="ECO:0007669"/>
    <property type="project" value="TreeGrafter"/>
</dbReference>
<dbReference type="GO" id="GO:0033228">
    <property type="term" value="P:cysteine export across plasma membrane"/>
    <property type="evidence" value="ECO:0007669"/>
    <property type="project" value="TreeGrafter"/>
</dbReference>
<dbReference type="InterPro" id="IPR001123">
    <property type="entry name" value="LeuE-type"/>
</dbReference>
<dbReference type="NCBIfam" id="NF007653">
    <property type="entry name" value="PRK10323.1"/>
    <property type="match status" value="1"/>
</dbReference>
<dbReference type="PANTHER" id="PTHR30086">
    <property type="entry name" value="ARGININE EXPORTER PROTEIN ARGO"/>
    <property type="match status" value="1"/>
</dbReference>
<dbReference type="PANTHER" id="PTHR30086:SF20">
    <property type="entry name" value="ARGININE EXPORTER PROTEIN ARGO-RELATED"/>
    <property type="match status" value="1"/>
</dbReference>
<dbReference type="Pfam" id="PF01810">
    <property type="entry name" value="LysE"/>
    <property type="match status" value="1"/>
</dbReference>
<accession>Q0T1S8</accession>